<accession>B8ZSD5</accession>
<protein>
    <recommendedName>
        <fullName evidence="1">Large ribosomal subunit protein uL1</fullName>
    </recommendedName>
    <alternativeName>
        <fullName evidence="2">50S ribosomal protein L1</fullName>
    </alternativeName>
</protein>
<feature type="chain" id="PRO_1000165692" description="Large ribosomal subunit protein uL1">
    <location>
        <begin position="1"/>
        <end position="235"/>
    </location>
</feature>
<keyword id="KW-0678">Repressor</keyword>
<keyword id="KW-0687">Ribonucleoprotein</keyword>
<keyword id="KW-0689">Ribosomal protein</keyword>
<keyword id="KW-0694">RNA-binding</keyword>
<keyword id="KW-0699">rRNA-binding</keyword>
<keyword id="KW-0810">Translation regulation</keyword>
<keyword id="KW-0820">tRNA-binding</keyword>
<proteinExistence type="inferred from homology"/>
<evidence type="ECO:0000255" key="1">
    <source>
        <dbReference type="HAMAP-Rule" id="MF_01318"/>
    </source>
</evidence>
<evidence type="ECO:0000305" key="2"/>
<sequence length="235" mass="24976">MSKSSKAYRAAAVKVDRTNLYTPLQAAKLAKETSSTRQDATVEVAIRLGVDSRKADQMVRGTVNLPHGTGKTARVAVFAVGEKADVAVAAGADVVGSDDLIEKIQGGWLEFDAAVATPDQMAKVGRIARVLGPRGLMPNPKTGTVTPDVAKAVADIKGGKINFRVDKQANLHFVIGKASFDEKRLAENYGAALEEVLRLKPSSSKGRYLKKVTVSTTMGPGIPVDPSITRNFTEE</sequence>
<dbReference type="EMBL" id="FM211192">
    <property type="protein sequence ID" value="CAR72000.1"/>
    <property type="molecule type" value="Genomic_DNA"/>
</dbReference>
<dbReference type="SMR" id="B8ZSD5"/>
<dbReference type="KEGG" id="mlb:MLBr01904"/>
<dbReference type="HOGENOM" id="CLU_062853_0_0_11"/>
<dbReference type="Proteomes" id="UP000006900">
    <property type="component" value="Chromosome"/>
</dbReference>
<dbReference type="GO" id="GO:0015934">
    <property type="term" value="C:large ribosomal subunit"/>
    <property type="evidence" value="ECO:0007669"/>
    <property type="project" value="InterPro"/>
</dbReference>
<dbReference type="GO" id="GO:0019843">
    <property type="term" value="F:rRNA binding"/>
    <property type="evidence" value="ECO:0007669"/>
    <property type="project" value="UniProtKB-UniRule"/>
</dbReference>
<dbReference type="GO" id="GO:0003735">
    <property type="term" value="F:structural constituent of ribosome"/>
    <property type="evidence" value="ECO:0007669"/>
    <property type="project" value="InterPro"/>
</dbReference>
<dbReference type="GO" id="GO:0000049">
    <property type="term" value="F:tRNA binding"/>
    <property type="evidence" value="ECO:0007669"/>
    <property type="project" value="UniProtKB-KW"/>
</dbReference>
<dbReference type="GO" id="GO:0006417">
    <property type="term" value="P:regulation of translation"/>
    <property type="evidence" value="ECO:0007669"/>
    <property type="project" value="UniProtKB-KW"/>
</dbReference>
<dbReference type="GO" id="GO:0006412">
    <property type="term" value="P:translation"/>
    <property type="evidence" value="ECO:0007669"/>
    <property type="project" value="UniProtKB-UniRule"/>
</dbReference>
<dbReference type="CDD" id="cd00403">
    <property type="entry name" value="Ribosomal_L1"/>
    <property type="match status" value="1"/>
</dbReference>
<dbReference type="FunFam" id="3.40.50.790:FF:000001">
    <property type="entry name" value="50S ribosomal protein L1"/>
    <property type="match status" value="1"/>
</dbReference>
<dbReference type="Gene3D" id="3.30.190.20">
    <property type="match status" value="1"/>
</dbReference>
<dbReference type="Gene3D" id="3.40.50.790">
    <property type="match status" value="1"/>
</dbReference>
<dbReference type="HAMAP" id="MF_01318_B">
    <property type="entry name" value="Ribosomal_uL1_B"/>
    <property type="match status" value="1"/>
</dbReference>
<dbReference type="InterPro" id="IPR005878">
    <property type="entry name" value="Ribosom_uL1_bac-type"/>
</dbReference>
<dbReference type="InterPro" id="IPR002143">
    <property type="entry name" value="Ribosomal_uL1"/>
</dbReference>
<dbReference type="InterPro" id="IPR023674">
    <property type="entry name" value="Ribosomal_uL1-like"/>
</dbReference>
<dbReference type="InterPro" id="IPR028364">
    <property type="entry name" value="Ribosomal_uL1/biogenesis"/>
</dbReference>
<dbReference type="InterPro" id="IPR016095">
    <property type="entry name" value="Ribosomal_uL1_3-a/b-sand"/>
</dbReference>
<dbReference type="InterPro" id="IPR023673">
    <property type="entry name" value="Ribosomal_uL1_CS"/>
</dbReference>
<dbReference type="NCBIfam" id="TIGR01169">
    <property type="entry name" value="rplA_bact"/>
    <property type="match status" value="1"/>
</dbReference>
<dbReference type="PANTHER" id="PTHR36427">
    <property type="entry name" value="54S RIBOSOMAL PROTEIN L1, MITOCHONDRIAL"/>
    <property type="match status" value="1"/>
</dbReference>
<dbReference type="PANTHER" id="PTHR36427:SF3">
    <property type="entry name" value="LARGE RIBOSOMAL SUBUNIT PROTEIN UL1M"/>
    <property type="match status" value="1"/>
</dbReference>
<dbReference type="Pfam" id="PF00687">
    <property type="entry name" value="Ribosomal_L1"/>
    <property type="match status" value="1"/>
</dbReference>
<dbReference type="PIRSF" id="PIRSF002155">
    <property type="entry name" value="Ribosomal_L1"/>
    <property type="match status" value="1"/>
</dbReference>
<dbReference type="SUPFAM" id="SSF56808">
    <property type="entry name" value="Ribosomal protein L1"/>
    <property type="match status" value="1"/>
</dbReference>
<dbReference type="PROSITE" id="PS01199">
    <property type="entry name" value="RIBOSOMAL_L1"/>
    <property type="match status" value="1"/>
</dbReference>
<name>RL1_MYCLB</name>
<reference key="1">
    <citation type="journal article" date="2009" name="Nat. Genet.">
        <title>Comparative genomic and phylogeographic analysis of Mycobacterium leprae.</title>
        <authorList>
            <person name="Monot M."/>
            <person name="Honore N."/>
            <person name="Garnier T."/>
            <person name="Zidane N."/>
            <person name="Sherafi D."/>
            <person name="Paniz-Mondolfi A."/>
            <person name="Matsuoka M."/>
            <person name="Taylor G.M."/>
            <person name="Donoghue H.D."/>
            <person name="Bouwman A."/>
            <person name="Mays S."/>
            <person name="Watson C."/>
            <person name="Lockwood D."/>
            <person name="Khamispour A."/>
            <person name="Dowlati Y."/>
            <person name="Jianping S."/>
            <person name="Rea T.H."/>
            <person name="Vera-Cabrera L."/>
            <person name="Stefani M.M."/>
            <person name="Banu S."/>
            <person name="Macdonald M."/>
            <person name="Sapkota B.R."/>
            <person name="Spencer J.S."/>
            <person name="Thomas J."/>
            <person name="Harshman K."/>
            <person name="Singh P."/>
            <person name="Busso P."/>
            <person name="Gattiker A."/>
            <person name="Rougemont J."/>
            <person name="Brennan P.J."/>
            <person name="Cole S.T."/>
        </authorList>
    </citation>
    <scope>NUCLEOTIDE SEQUENCE [LARGE SCALE GENOMIC DNA]</scope>
    <source>
        <strain>Br4923</strain>
    </source>
</reference>
<comment type="function">
    <text evidence="1">Binds directly to 23S rRNA. The L1 stalk is quite mobile in the ribosome, and is involved in E site tRNA release.</text>
</comment>
<comment type="function">
    <text evidence="1">Protein L1 is also a translational repressor protein, it controls the translation of the L11 operon by binding to its mRNA.</text>
</comment>
<comment type="subunit">
    <text evidence="1">Part of the 50S ribosomal subunit.</text>
</comment>
<comment type="similarity">
    <text evidence="1">Belongs to the universal ribosomal protein uL1 family.</text>
</comment>
<gene>
    <name evidence="1" type="primary">rplA</name>
    <name type="ordered locus">MLBr01904</name>
</gene>
<organism>
    <name type="scientific">Mycobacterium leprae (strain Br4923)</name>
    <dbReference type="NCBI Taxonomy" id="561304"/>
    <lineage>
        <taxon>Bacteria</taxon>
        <taxon>Bacillati</taxon>
        <taxon>Actinomycetota</taxon>
        <taxon>Actinomycetes</taxon>
        <taxon>Mycobacteriales</taxon>
        <taxon>Mycobacteriaceae</taxon>
        <taxon>Mycobacterium</taxon>
    </lineage>
</organism>